<sequence length="409" mass="45531">MFVQEEKIFAGKVLRLHICAADGAEWLEEATEDTSVEKLKESCLKHGAHGSLEDPKNVTHHKLIHAASERVLSDSKTILEENIQDQDVLLLIKKRVPSPLPKMADVSAEEKKKQEQKAPDKDAILRATANLPACSTDRTAVQTTMRDFQTELRKILVSLIEVAQKLLALNPDAVELFKKANAMLDEDEDERVDETALRQLTEMGFPESRASKALRLNHMSVPQAMEWLIEHSEDPAIDTPLPGHAAQAGASAAATTSSTSSEAAVGTSVEDEESRDELTEIFKKIRRKKEFRADARAVISLMEMGFDEKEVIDALRVNNNQQNAACEWLLGDRKPSPEELDQGIDPNSPLFQAILDNPVVQLGLTNPKTLLAFEDMLENPLNSTQWMNDPETGPVMLQISRIFQTLNRT</sequence>
<proteinExistence type="evidence at protein level"/>
<reference key="1">
    <citation type="journal article" date="2005" name="Science">
        <title>The transcriptional landscape of the mammalian genome.</title>
        <authorList>
            <person name="Carninci P."/>
            <person name="Kasukawa T."/>
            <person name="Katayama S."/>
            <person name="Gough J."/>
            <person name="Frith M.C."/>
            <person name="Maeda N."/>
            <person name="Oyama R."/>
            <person name="Ravasi T."/>
            <person name="Lenhard B."/>
            <person name="Wells C."/>
            <person name="Kodzius R."/>
            <person name="Shimokawa K."/>
            <person name="Bajic V.B."/>
            <person name="Brenner S.E."/>
            <person name="Batalov S."/>
            <person name="Forrest A.R."/>
            <person name="Zavolan M."/>
            <person name="Davis M.J."/>
            <person name="Wilming L.G."/>
            <person name="Aidinis V."/>
            <person name="Allen J.E."/>
            <person name="Ambesi-Impiombato A."/>
            <person name="Apweiler R."/>
            <person name="Aturaliya R.N."/>
            <person name="Bailey T.L."/>
            <person name="Bansal M."/>
            <person name="Baxter L."/>
            <person name="Beisel K.W."/>
            <person name="Bersano T."/>
            <person name="Bono H."/>
            <person name="Chalk A.M."/>
            <person name="Chiu K.P."/>
            <person name="Choudhary V."/>
            <person name="Christoffels A."/>
            <person name="Clutterbuck D.R."/>
            <person name="Crowe M.L."/>
            <person name="Dalla E."/>
            <person name="Dalrymple B.P."/>
            <person name="de Bono B."/>
            <person name="Della Gatta G."/>
            <person name="di Bernardo D."/>
            <person name="Down T."/>
            <person name="Engstrom P."/>
            <person name="Fagiolini M."/>
            <person name="Faulkner G."/>
            <person name="Fletcher C.F."/>
            <person name="Fukushima T."/>
            <person name="Furuno M."/>
            <person name="Futaki S."/>
            <person name="Gariboldi M."/>
            <person name="Georgii-Hemming P."/>
            <person name="Gingeras T.R."/>
            <person name="Gojobori T."/>
            <person name="Green R.E."/>
            <person name="Gustincich S."/>
            <person name="Harbers M."/>
            <person name="Hayashi Y."/>
            <person name="Hensch T.K."/>
            <person name="Hirokawa N."/>
            <person name="Hill D."/>
            <person name="Huminiecki L."/>
            <person name="Iacono M."/>
            <person name="Ikeo K."/>
            <person name="Iwama A."/>
            <person name="Ishikawa T."/>
            <person name="Jakt M."/>
            <person name="Kanapin A."/>
            <person name="Katoh M."/>
            <person name="Kawasawa Y."/>
            <person name="Kelso J."/>
            <person name="Kitamura H."/>
            <person name="Kitano H."/>
            <person name="Kollias G."/>
            <person name="Krishnan S.P."/>
            <person name="Kruger A."/>
            <person name="Kummerfeld S.K."/>
            <person name="Kurochkin I.V."/>
            <person name="Lareau L.F."/>
            <person name="Lazarevic D."/>
            <person name="Lipovich L."/>
            <person name="Liu J."/>
            <person name="Liuni S."/>
            <person name="McWilliam S."/>
            <person name="Madan Babu M."/>
            <person name="Madera M."/>
            <person name="Marchionni L."/>
            <person name="Matsuda H."/>
            <person name="Matsuzawa S."/>
            <person name="Miki H."/>
            <person name="Mignone F."/>
            <person name="Miyake S."/>
            <person name="Morris K."/>
            <person name="Mottagui-Tabar S."/>
            <person name="Mulder N."/>
            <person name="Nakano N."/>
            <person name="Nakauchi H."/>
            <person name="Ng P."/>
            <person name="Nilsson R."/>
            <person name="Nishiguchi S."/>
            <person name="Nishikawa S."/>
            <person name="Nori F."/>
            <person name="Ohara O."/>
            <person name="Okazaki Y."/>
            <person name="Orlando V."/>
            <person name="Pang K.C."/>
            <person name="Pavan W.J."/>
            <person name="Pavesi G."/>
            <person name="Pesole G."/>
            <person name="Petrovsky N."/>
            <person name="Piazza S."/>
            <person name="Reed J."/>
            <person name="Reid J.F."/>
            <person name="Ring B.Z."/>
            <person name="Ringwald M."/>
            <person name="Rost B."/>
            <person name="Ruan Y."/>
            <person name="Salzberg S.L."/>
            <person name="Sandelin A."/>
            <person name="Schneider C."/>
            <person name="Schoenbach C."/>
            <person name="Sekiguchi K."/>
            <person name="Semple C.A."/>
            <person name="Seno S."/>
            <person name="Sessa L."/>
            <person name="Sheng Y."/>
            <person name="Shibata Y."/>
            <person name="Shimada H."/>
            <person name="Shimada K."/>
            <person name="Silva D."/>
            <person name="Sinclair B."/>
            <person name="Sperling S."/>
            <person name="Stupka E."/>
            <person name="Sugiura K."/>
            <person name="Sultana R."/>
            <person name="Takenaka Y."/>
            <person name="Taki K."/>
            <person name="Tammoja K."/>
            <person name="Tan S.L."/>
            <person name="Tang S."/>
            <person name="Taylor M.S."/>
            <person name="Tegner J."/>
            <person name="Teichmann S.A."/>
            <person name="Ueda H.R."/>
            <person name="van Nimwegen E."/>
            <person name="Verardo R."/>
            <person name="Wei C.L."/>
            <person name="Yagi K."/>
            <person name="Yamanishi H."/>
            <person name="Zabarovsky E."/>
            <person name="Zhu S."/>
            <person name="Zimmer A."/>
            <person name="Hide W."/>
            <person name="Bult C."/>
            <person name="Grimmond S.M."/>
            <person name="Teasdale R.D."/>
            <person name="Liu E.T."/>
            <person name="Brusic V."/>
            <person name="Quackenbush J."/>
            <person name="Wahlestedt C."/>
            <person name="Mattick J.S."/>
            <person name="Hume D.A."/>
            <person name="Kai C."/>
            <person name="Sasaki D."/>
            <person name="Tomaru Y."/>
            <person name="Fukuda S."/>
            <person name="Kanamori-Katayama M."/>
            <person name="Suzuki M."/>
            <person name="Aoki J."/>
            <person name="Arakawa T."/>
            <person name="Iida J."/>
            <person name="Imamura K."/>
            <person name="Itoh M."/>
            <person name="Kato T."/>
            <person name="Kawaji H."/>
            <person name="Kawagashira N."/>
            <person name="Kawashima T."/>
            <person name="Kojima M."/>
            <person name="Kondo S."/>
            <person name="Konno H."/>
            <person name="Nakano K."/>
            <person name="Ninomiya N."/>
            <person name="Nishio T."/>
            <person name="Okada M."/>
            <person name="Plessy C."/>
            <person name="Shibata K."/>
            <person name="Shiraki T."/>
            <person name="Suzuki S."/>
            <person name="Tagami M."/>
            <person name="Waki K."/>
            <person name="Watahiki A."/>
            <person name="Okamura-Oho Y."/>
            <person name="Suzuki H."/>
            <person name="Kawai J."/>
            <person name="Hayashizaki Y."/>
        </authorList>
    </citation>
    <scope>NUCLEOTIDE SEQUENCE [LARGE SCALE MRNA]</scope>
    <source>
        <strain>C57BL/6J</strain>
        <tissue>Bone marrow</tissue>
    </source>
</reference>
<reference key="2">
    <citation type="journal article" date="2004" name="Genome Res.">
        <title>The status, quality, and expansion of the NIH full-length cDNA project: the Mammalian Gene Collection (MGC).</title>
        <authorList>
            <consortium name="The MGC Project Team"/>
        </authorList>
    </citation>
    <scope>NUCLEOTIDE SEQUENCE [LARGE SCALE MRNA]</scope>
    <scope>VARIANTS GLY-252; ALA-269 AND THR-274</scope>
    <source>
        <strain>Czech II</strain>
        <tissue>Mammary tumor</tissue>
    </source>
</reference>
<reference key="3">
    <citation type="journal article" date="2010" name="Cell">
        <title>A tissue-specific atlas of mouse protein phosphorylation and expression.</title>
        <authorList>
            <person name="Huttlin E.L."/>
            <person name="Jedrychowski M.P."/>
            <person name="Elias J.E."/>
            <person name="Goswami T."/>
            <person name="Rad R."/>
            <person name="Beausoleil S.A."/>
            <person name="Villen J."/>
            <person name="Haas W."/>
            <person name="Sowa M.E."/>
            <person name="Gygi S.P."/>
        </authorList>
    </citation>
    <scope>IDENTIFICATION BY MASS SPECTROMETRY [LARGE SCALE ANALYSIS]</scope>
    <source>
        <tissue>Brown adipose tissue</tissue>
        <tissue>Liver</tissue>
        <tissue>Lung</tissue>
        <tissue>Spleen</tissue>
        <tissue>Testis</tissue>
    </source>
</reference>
<dbReference type="EMBL" id="AK157857">
    <property type="protein sequence ID" value="BAE34235.1"/>
    <property type="molecule type" value="mRNA"/>
</dbReference>
<dbReference type="EMBL" id="BC021811">
    <property type="protein sequence ID" value="AAH21811.1"/>
    <property type="molecule type" value="mRNA"/>
</dbReference>
<dbReference type="CCDS" id="CCDS15795.1"/>
<dbReference type="RefSeq" id="NP_598596.2">
    <property type="nucleotide sequence ID" value="NM_133835.2"/>
</dbReference>
<dbReference type="SMR" id="Q8VDI7"/>
<dbReference type="BioGRID" id="221128">
    <property type="interactions" value="7"/>
</dbReference>
<dbReference type="FunCoup" id="Q8VDI7">
    <property type="interactions" value="975"/>
</dbReference>
<dbReference type="STRING" id="10090.ENSMUSP00000040220"/>
<dbReference type="GlyGen" id="Q8VDI7">
    <property type="glycosylation" value="1 site, 1 N-linked glycan (1 site)"/>
</dbReference>
<dbReference type="iPTMnet" id="Q8VDI7"/>
<dbReference type="PhosphoSitePlus" id="Q8VDI7"/>
<dbReference type="jPOST" id="Q8VDI7"/>
<dbReference type="PaxDb" id="10090-ENSMUSP00000040220"/>
<dbReference type="PeptideAtlas" id="Q8VDI7"/>
<dbReference type="ProteomicsDB" id="297780"/>
<dbReference type="Pumba" id="Q8VDI7"/>
<dbReference type="Antibodypedia" id="18666">
    <property type="antibodies" value="207 antibodies from 28 providers"/>
</dbReference>
<dbReference type="DNASU" id="98766"/>
<dbReference type="Ensembl" id="ENSMUST00000036509.14">
    <property type="protein sequence ID" value="ENSMUSP00000040220.8"/>
    <property type="gene ID" value="ENSMUSG00000036352.17"/>
</dbReference>
<dbReference type="GeneID" id="98766"/>
<dbReference type="KEGG" id="mmu:98766"/>
<dbReference type="UCSC" id="uc008itz.2">
    <property type="organism name" value="mouse"/>
</dbReference>
<dbReference type="AGR" id="MGI:1920995"/>
<dbReference type="CTD" id="10422"/>
<dbReference type="MGI" id="MGI:1920995">
    <property type="gene designation" value="Ubac1"/>
</dbReference>
<dbReference type="VEuPathDB" id="HostDB:ENSMUSG00000036352"/>
<dbReference type="eggNOG" id="ENOG502QQQ6">
    <property type="taxonomic scope" value="Eukaryota"/>
</dbReference>
<dbReference type="GeneTree" id="ENSGT00390000014658"/>
<dbReference type="HOGENOM" id="CLU_035938_0_0_1"/>
<dbReference type="InParanoid" id="Q8VDI7"/>
<dbReference type="OMA" id="WLIQNDS"/>
<dbReference type="OrthoDB" id="336240at2759"/>
<dbReference type="PhylomeDB" id="Q8VDI7"/>
<dbReference type="TreeFam" id="TF324579"/>
<dbReference type="Reactome" id="R-MMU-983168">
    <property type="pathway name" value="Antigen processing: Ubiquitination &amp; Proteasome degradation"/>
</dbReference>
<dbReference type="UniPathway" id="UPA00143"/>
<dbReference type="BioGRID-ORCS" id="98766">
    <property type="hits" value="4 hits in 80 CRISPR screens"/>
</dbReference>
<dbReference type="ChiTaRS" id="Ubac1">
    <property type="organism name" value="mouse"/>
</dbReference>
<dbReference type="PRO" id="PR:Q8VDI7"/>
<dbReference type="Proteomes" id="UP000000589">
    <property type="component" value="Chromosome 2"/>
</dbReference>
<dbReference type="RNAct" id="Q8VDI7">
    <property type="molecule type" value="protein"/>
</dbReference>
<dbReference type="Bgee" id="ENSMUSG00000036352">
    <property type="expression patterns" value="Expressed in fetal liver hematopoietic progenitor cell and 270 other cell types or tissues"/>
</dbReference>
<dbReference type="ExpressionAtlas" id="Q8VDI7">
    <property type="expression patterns" value="baseline and differential"/>
</dbReference>
<dbReference type="GO" id="GO:0005829">
    <property type="term" value="C:cytosol"/>
    <property type="evidence" value="ECO:0007669"/>
    <property type="project" value="Ensembl"/>
</dbReference>
<dbReference type="GO" id="GO:0005794">
    <property type="term" value="C:Golgi apparatus"/>
    <property type="evidence" value="ECO:0007669"/>
    <property type="project" value="Ensembl"/>
</dbReference>
<dbReference type="GO" id="GO:0005886">
    <property type="term" value="C:plasma membrane"/>
    <property type="evidence" value="ECO:0007669"/>
    <property type="project" value="Ensembl"/>
</dbReference>
<dbReference type="GO" id="GO:0031593">
    <property type="term" value="F:polyubiquitin modification-dependent protein binding"/>
    <property type="evidence" value="ECO:0000250"/>
    <property type="project" value="UniProtKB"/>
</dbReference>
<dbReference type="GO" id="GO:0070628">
    <property type="term" value="F:proteasome binding"/>
    <property type="evidence" value="ECO:0000250"/>
    <property type="project" value="UniProtKB"/>
</dbReference>
<dbReference type="GO" id="GO:0051604">
    <property type="term" value="P:protein maturation"/>
    <property type="evidence" value="ECO:0000250"/>
    <property type="project" value="UniProtKB"/>
</dbReference>
<dbReference type="GO" id="GO:0016567">
    <property type="term" value="P:protein ubiquitination"/>
    <property type="evidence" value="ECO:0000250"/>
    <property type="project" value="UniProtKB"/>
</dbReference>
<dbReference type="CDD" id="cd14303">
    <property type="entry name" value="UBA1_KPC2"/>
    <property type="match status" value="1"/>
</dbReference>
<dbReference type="CDD" id="cd14304">
    <property type="entry name" value="UBA2_KPC2"/>
    <property type="match status" value="1"/>
</dbReference>
<dbReference type="CDD" id="cd17066">
    <property type="entry name" value="Ubl_KPC2"/>
    <property type="match status" value="1"/>
</dbReference>
<dbReference type="FunFam" id="1.10.260.100:FF:000006">
    <property type="entry name" value="Ubiquitin-associated domain-containing protein 1"/>
    <property type="match status" value="1"/>
</dbReference>
<dbReference type="FunFam" id="1.10.8.10:FF:000099">
    <property type="entry name" value="Ubiquitin-associated domain-containing protein 1"/>
    <property type="match status" value="1"/>
</dbReference>
<dbReference type="Gene3D" id="1.10.260.100">
    <property type="match status" value="1"/>
</dbReference>
<dbReference type="Gene3D" id="1.10.8.10">
    <property type="entry name" value="DNA helicase RuvA subunit, C-terminal domain"/>
    <property type="match status" value="2"/>
</dbReference>
<dbReference type="InterPro" id="IPR006636">
    <property type="entry name" value="STI1_HS-bd"/>
</dbReference>
<dbReference type="InterPro" id="IPR015940">
    <property type="entry name" value="UBA"/>
</dbReference>
<dbReference type="InterPro" id="IPR009060">
    <property type="entry name" value="UBA-like_sf"/>
</dbReference>
<dbReference type="InterPro" id="IPR041926">
    <property type="entry name" value="UBA1_UBAC1"/>
</dbReference>
<dbReference type="InterPro" id="IPR041927">
    <property type="entry name" value="UBA2_UBAC1"/>
</dbReference>
<dbReference type="InterPro" id="IPR052476">
    <property type="entry name" value="UBAC1"/>
</dbReference>
<dbReference type="InterPro" id="IPR029071">
    <property type="entry name" value="Ubiquitin-like_domsf"/>
</dbReference>
<dbReference type="PANTHER" id="PTHR46738">
    <property type="entry name" value="UBIQUITIN-ASSOCIATED DOMAIN-CONTAINING PROTEIN 1"/>
    <property type="match status" value="1"/>
</dbReference>
<dbReference type="PANTHER" id="PTHR46738:SF1">
    <property type="entry name" value="UBIQUITIN-ASSOCIATED DOMAIN-CONTAINING PROTEIN 1"/>
    <property type="match status" value="1"/>
</dbReference>
<dbReference type="Pfam" id="PF22562">
    <property type="entry name" value="UBA_7"/>
    <property type="match status" value="2"/>
</dbReference>
<dbReference type="Pfam" id="PF23326">
    <property type="entry name" value="UBL_UBAC1"/>
    <property type="match status" value="1"/>
</dbReference>
<dbReference type="SMART" id="SM00727">
    <property type="entry name" value="STI1"/>
    <property type="match status" value="1"/>
</dbReference>
<dbReference type="SMART" id="SM00165">
    <property type="entry name" value="UBA"/>
    <property type="match status" value="2"/>
</dbReference>
<dbReference type="SUPFAM" id="SSF46934">
    <property type="entry name" value="UBA-like"/>
    <property type="match status" value="2"/>
</dbReference>
<dbReference type="SUPFAM" id="SSF54236">
    <property type="entry name" value="Ubiquitin-like"/>
    <property type="match status" value="1"/>
</dbReference>
<dbReference type="PROSITE" id="PS50030">
    <property type="entry name" value="UBA"/>
    <property type="match status" value="2"/>
</dbReference>
<organism>
    <name type="scientific">Mus musculus</name>
    <name type="common">Mouse</name>
    <dbReference type="NCBI Taxonomy" id="10090"/>
    <lineage>
        <taxon>Eukaryota</taxon>
        <taxon>Metazoa</taxon>
        <taxon>Chordata</taxon>
        <taxon>Craniata</taxon>
        <taxon>Vertebrata</taxon>
        <taxon>Euteleostomi</taxon>
        <taxon>Mammalia</taxon>
        <taxon>Eutheria</taxon>
        <taxon>Euarchontoglires</taxon>
        <taxon>Glires</taxon>
        <taxon>Rodentia</taxon>
        <taxon>Myomorpha</taxon>
        <taxon>Muroidea</taxon>
        <taxon>Muridae</taxon>
        <taxon>Murinae</taxon>
        <taxon>Mus</taxon>
        <taxon>Mus</taxon>
    </lineage>
</organism>
<feature type="chain" id="PRO_0000250450" description="Ubiquitin-associated domain-containing protein 1">
    <location>
        <begin position="1"/>
        <end position="409"/>
    </location>
</feature>
<feature type="domain" description="Ubiquitin-like">
    <location>
        <begin position="14"/>
        <end position="98"/>
    </location>
</feature>
<feature type="domain" description="UBA 1" evidence="2">
    <location>
        <begin position="187"/>
        <end position="231"/>
    </location>
</feature>
<feature type="domain" description="UBA 2" evidence="2">
    <location>
        <begin position="292"/>
        <end position="332"/>
    </location>
</feature>
<feature type="domain" description="STI1">
    <location>
        <begin position="357"/>
        <end position="396"/>
    </location>
</feature>
<feature type="region of interest" description="Disordered" evidence="3">
    <location>
        <begin position="101"/>
        <end position="122"/>
    </location>
</feature>
<feature type="region of interest" description="Disordered" evidence="3">
    <location>
        <begin position="239"/>
        <end position="273"/>
    </location>
</feature>
<feature type="compositionally biased region" description="Basic and acidic residues" evidence="3">
    <location>
        <begin position="108"/>
        <end position="122"/>
    </location>
</feature>
<feature type="compositionally biased region" description="Low complexity" evidence="3">
    <location>
        <begin position="245"/>
        <end position="268"/>
    </location>
</feature>
<feature type="modified residue" description="N-acetylmethionine" evidence="1">
    <location>
        <position position="1"/>
    </location>
</feature>
<feature type="sequence variant" description="In strain: Czech II." evidence="4">
    <original>A</original>
    <variation>G</variation>
    <location>
        <position position="252"/>
    </location>
</feature>
<feature type="sequence variant" description="In strain: Czech II." evidence="4">
    <original>V</original>
    <variation>A</variation>
    <location>
        <position position="269"/>
    </location>
</feature>
<feature type="sequence variant" description="In strain: Czech II." evidence="4">
    <original>S</original>
    <variation>T</variation>
    <location>
        <position position="274"/>
    </location>
</feature>
<evidence type="ECO:0000250" key="1">
    <source>
        <dbReference type="UniProtKB" id="Q9BSL1"/>
    </source>
</evidence>
<evidence type="ECO:0000255" key="2">
    <source>
        <dbReference type="PROSITE-ProRule" id="PRU00212"/>
    </source>
</evidence>
<evidence type="ECO:0000256" key="3">
    <source>
        <dbReference type="SAM" id="MobiDB-lite"/>
    </source>
</evidence>
<evidence type="ECO:0000269" key="4">
    <source>
    </source>
</evidence>
<protein>
    <recommendedName>
        <fullName>Ubiquitin-associated domain-containing protein 1</fullName>
        <shortName>UBA domain-containing protein 1</shortName>
    </recommendedName>
    <alternativeName>
        <fullName>E3 ubiquitin-protein ligase subunit KPC2</fullName>
    </alternativeName>
    <alternativeName>
        <fullName>Kip1 ubiquitination-promoting complex protein 2</fullName>
    </alternativeName>
</protein>
<gene>
    <name type="primary">Ubac1</name>
    <name type="synonym">Kpc2</name>
    <name type="synonym">Ubadc1</name>
</gene>
<name>UBAC1_MOUSE</name>
<keyword id="KW-0007">Acetylation</keyword>
<keyword id="KW-0963">Cytoplasm</keyword>
<keyword id="KW-1185">Reference proteome</keyword>
<keyword id="KW-0677">Repeat</keyword>
<keyword id="KW-0833">Ubl conjugation pathway</keyword>
<accession>Q8VDI7</accession>
<accession>Q3TZH3</accession>
<comment type="function">
    <text evidence="1">Non-catalytic component of the KPC complex, a E3 ubiquitin-protein ligase complex that mediates polyubiquitination of target proteins, such as CDKN1B and NFKB1. The KPC complex catalyzes polyubiquitination and proteasome-mediated degradation of CDKN1B during G1 phase of the cell cycle. The KPC complex also acts as a key regulator of the NF-kappa-B signaling by promoting maturation of the NFKB1 component of NF-kappa-B by catalyzing ubiquitination of the NFKB1 p105 precursor. Within the KPC complex, UBAC1 acts as an adapter that promotes the transfer of target proteins that have been polyubiquitinated by RNF123/KPC1 to the 26S proteasome.</text>
</comment>
<comment type="pathway">
    <text evidence="1">Protein modification; protein ubiquitination.</text>
</comment>
<comment type="subunit">
    <text evidence="1">Component of the KPC complex composed of RNF123/KPC1 and UBAC1/KPC2. Interacts (via ubiquitin-like domain) with RNF123. Interacts (via ubiquitin-like and UBA domains) with the proteasome via its N-terminal domain.</text>
</comment>
<comment type="subcellular location">
    <subcellularLocation>
        <location evidence="1">Cytoplasm</location>
    </subcellularLocation>
</comment>
<comment type="domain">
    <text evidence="1">The UBA domains recognize and bind polyubiquitinated proteins.</text>
</comment>